<accession>B7LC22</accession>
<organism>
    <name type="scientific">Escherichia coli (strain 55989 / EAEC)</name>
    <dbReference type="NCBI Taxonomy" id="585055"/>
    <lineage>
        <taxon>Bacteria</taxon>
        <taxon>Pseudomonadati</taxon>
        <taxon>Pseudomonadota</taxon>
        <taxon>Gammaproteobacteria</taxon>
        <taxon>Enterobacterales</taxon>
        <taxon>Enterobacteriaceae</taxon>
        <taxon>Escherichia</taxon>
    </lineage>
</organism>
<feature type="chain" id="PRO_1000188064" description="Small ribosomal subunit biogenesis GTPase RsgA">
    <location>
        <begin position="1"/>
        <end position="350"/>
    </location>
</feature>
<feature type="domain" description="CP-type G" evidence="2">
    <location>
        <begin position="104"/>
        <end position="273"/>
    </location>
</feature>
<feature type="region of interest" description="Disordered" evidence="3">
    <location>
        <begin position="1"/>
        <end position="33"/>
    </location>
</feature>
<feature type="compositionally biased region" description="Polar residues" evidence="3">
    <location>
        <begin position="1"/>
        <end position="17"/>
    </location>
</feature>
<feature type="binding site" evidence="1">
    <location>
        <begin position="160"/>
        <end position="163"/>
    </location>
    <ligand>
        <name>GTP</name>
        <dbReference type="ChEBI" id="CHEBI:37565"/>
    </ligand>
</feature>
<feature type="binding site" evidence="1">
    <location>
        <begin position="214"/>
        <end position="222"/>
    </location>
    <ligand>
        <name>GTP</name>
        <dbReference type="ChEBI" id="CHEBI:37565"/>
    </ligand>
</feature>
<feature type="binding site" evidence="1">
    <location>
        <position position="297"/>
    </location>
    <ligand>
        <name>Zn(2+)</name>
        <dbReference type="ChEBI" id="CHEBI:29105"/>
    </ligand>
</feature>
<feature type="binding site" evidence="1">
    <location>
        <position position="302"/>
    </location>
    <ligand>
        <name>Zn(2+)</name>
        <dbReference type="ChEBI" id="CHEBI:29105"/>
    </ligand>
</feature>
<feature type="binding site" evidence="1">
    <location>
        <position position="304"/>
    </location>
    <ligand>
        <name>Zn(2+)</name>
        <dbReference type="ChEBI" id="CHEBI:29105"/>
    </ligand>
</feature>
<feature type="binding site" evidence="1">
    <location>
        <position position="310"/>
    </location>
    <ligand>
        <name>Zn(2+)</name>
        <dbReference type="ChEBI" id="CHEBI:29105"/>
    </ligand>
</feature>
<keyword id="KW-0963">Cytoplasm</keyword>
<keyword id="KW-0342">GTP-binding</keyword>
<keyword id="KW-0378">Hydrolase</keyword>
<keyword id="KW-0479">Metal-binding</keyword>
<keyword id="KW-0547">Nucleotide-binding</keyword>
<keyword id="KW-1185">Reference proteome</keyword>
<keyword id="KW-0690">Ribosome biogenesis</keyword>
<keyword id="KW-0694">RNA-binding</keyword>
<keyword id="KW-0699">rRNA-binding</keyword>
<keyword id="KW-0862">Zinc</keyword>
<reference key="1">
    <citation type="journal article" date="2009" name="PLoS Genet.">
        <title>Organised genome dynamics in the Escherichia coli species results in highly diverse adaptive paths.</title>
        <authorList>
            <person name="Touchon M."/>
            <person name="Hoede C."/>
            <person name="Tenaillon O."/>
            <person name="Barbe V."/>
            <person name="Baeriswyl S."/>
            <person name="Bidet P."/>
            <person name="Bingen E."/>
            <person name="Bonacorsi S."/>
            <person name="Bouchier C."/>
            <person name="Bouvet O."/>
            <person name="Calteau A."/>
            <person name="Chiapello H."/>
            <person name="Clermont O."/>
            <person name="Cruveiller S."/>
            <person name="Danchin A."/>
            <person name="Diard M."/>
            <person name="Dossat C."/>
            <person name="Karoui M.E."/>
            <person name="Frapy E."/>
            <person name="Garry L."/>
            <person name="Ghigo J.M."/>
            <person name="Gilles A.M."/>
            <person name="Johnson J."/>
            <person name="Le Bouguenec C."/>
            <person name="Lescat M."/>
            <person name="Mangenot S."/>
            <person name="Martinez-Jehanne V."/>
            <person name="Matic I."/>
            <person name="Nassif X."/>
            <person name="Oztas S."/>
            <person name="Petit M.A."/>
            <person name="Pichon C."/>
            <person name="Rouy Z."/>
            <person name="Ruf C.S."/>
            <person name="Schneider D."/>
            <person name="Tourret J."/>
            <person name="Vacherie B."/>
            <person name="Vallenet D."/>
            <person name="Medigue C."/>
            <person name="Rocha E.P.C."/>
            <person name="Denamur E."/>
        </authorList>
    </citation>
    <scope>NUCLEOTIDE SEQUENCE [LARGE SCALE GENOMIC DNA]</scope>
    <source>
        <strain>55989 / EAEC</strain>
    </source>
</reference>
<protein>
    <recommendedName>
        <fullName evidence="1">Small ribosomal subunit biogenesis GTPase RsgA</fullName>
        <ecNumber evidence="1">3.6.1.-</ecNumber>
    </recommendedName>
</protein>
<dbReference type="EC" id="3.6.1.-" evidence="1"/>
<dbReference type="EMBL" id="CU928145">
    <property type="protein sequence ID" value="CAV01630.1"/>
    <property type="molecule type" value="Genomic_DNA"/>
</dbReference>
<dbReference type="RefSeq" id="WP_000041970.1">
    <property type="nucleotide sequence ID" value="NC_011748.1"/>
</dbReference>
<dbReference type="SMR" id="B7LC22"/>
<dbReference type="GeneID" id="93777661"/>
<dbReference type="KEGG" id="eck:EC55989_4718"/>
<dbReference type="HOGENOM" id="CLU_033617_2_0_6"/>
<dbReference type="Proteomes" id="UP000000746">
    <property type="component" value="Chromosome"/>
</dbReference>
<dbReference type="GO" id="GO:0005737">
    <property type="term" value="C:cytoplasm"/>
    <property type="evidence" value="ECO:0007669"/>
    <property type="project" value="UniProtKB-SubCell"/>
</dbReference>
<dbReference type="GO" id="GO:0005525">
    <property type="term" value="F:GTP binding"/>
    <property type="evidence" value="ECO:0007669"/>
    <property type="project" value="UniProtKB-UniRule"/>
</dbReference>
<dbReference type="GO" id="GO:0003924">
    <property type="term" value="F:GTPase activity"/>
    <property type="evidence" value="ECO:0007669"/>
    <property type="project" value="UniProtKB-UniRule"/>
</dbReference>
<dbReference type="GO" id="GO:0046872">
    <property type="term" value="F:metal ion binding"/>
    <property type="evidence" value="ECO:0007669"/>
    <property type="project" value="UniProtKB-KW"/>
</dbReference>
<dbReference type="GO" id="GO:0019843">
    <property type="term" value="F:rRNA binding"/>
    <property type="evidence" value="ECO:0007669"/>
    <property type="project" value="UniProtKB-KW"/>
</dbReference>
<dbReference type="GO" id="GO:0042274">
    <property type="term" value="P:ribosomal small subunit biogenesis"/>
    <property type="evidence" value="ECO:0007669"/>
    <property type="project" value="UniProtKB-UniRule"/>
</dbReference>
<dbReference type="CDD" id="cd01854">
    <property type="entry name" value="YjeQ_EngC"/>
    <property type="match status" value="1"/>
</dbReference>
<dbReference type="FunFam" id="1.10.40.50:FF:000001">
    <property type="entry name" value="Small ribosomal subunit biogenesis GTPase RsgA"/>
    <property type="match status" value="1"/>
</dbReference>
<dbReference type="FunFam" id="2.40.50.140:FF:000122">
    <property type="entry name" value="Small ribosomal subunit biogenesis GTPase RsgA"/>
    <property type="match status" value="1"/>
</dbReference>
<dbReference type="FunFam" id="3.40.50.300:FF:000389">
    <property type="entry name" value="Small ribosomal subunit biogenesis GTPase RsgA"/>
    <property type="match status" value="1"/>
</dbReference>
<dbReference type="Gene3D" id="2.40.50.140">
    <property type="entry name" value="Nucleic acid-binding proteins"/>
    <property type="match status" value="1"/>
</dbReference>
<dbReference type="Gene3D" id="3.40.50.300">
    <property type="entry name" value="P-loop containing nucleotide triphosphate hydrolases"/>
    <property type="match status" value="1"/>
</dbReference>
<dbReference type="Gene3D" id="1.10.40.50">
    <property type="entry name" value="Probable gtpase engc, domain 3"/>
    <property type="match status" value="1"/>
</dbReference>
<dbReference type="HAMAP" id="MF_01820">
    <property type="entry name" value="GTPase_RsgA"/>
    <property type="match status" value="1"/>
</dbReference>
<dbReference type="InterPro" id="IPR030378">
    <property type="entry name" value="G_CP_dom"/>
</dbReference>
<dbReference type="InterPro" id="IPR012340">
    <property type="entry name" value="NA-bd_OB-fold"/>
</dbReference>
<dbReference type="InterPro" id="IPR027417">
    <property type="entry name" value="P-loop_NTPase"/>
</dbReference>
<dbReference type="InterPro" id="IPR004881">
    <property type="entry name" value="Ribosome_biogen_GTPase_RsgA"/>
</dbReference>
<dbReference type="InterPro" id="IPR010914">
    <property type="entry name" value="RsgA_GTPase_dom"/>
</dbReference>
<dbReference type="NCBIfam" id="NF008931">
    <property type="entry name" value="PRK12288.1"/>
    <property type="match status" value="1"/>
</dbReference>
<dbReference type="NCBIfam" id="TIGR00157">
    <property type="entry name" value="ribosome small subunit-dependent GTPase A"/>
    <property type="match status" value="1"/>
</dbReference>
<dbReference type="PANTHER" id="PTHR32120">
    <property type="entry name" value="SMALL RIBOSOMAL SUBUNIT BIOGENESIS GTPASE RSGA"/>
    <property type="match status" value="1"/>
</dbReference>
<dbReference type="PANTHER" id="PTHR32120:SF11">
    <property type="entry name" value="SMALL RIBOSOMAL SUBUNIT BIOGENESIS GTPASE RSGA 1, MITOCHONDRIAL-RELATED"/>
    <property type="match status" value="1"/>
</dbReference>
<dbReference type="Pfam" id="PF03193">
    <property type="entry name" value="RsgA_GTPase"/>
    <property type="match status" value="1"/>
</dbReference>
<dbReference type="SUPFAM" id="SSF52540">
    <property type="entry name" value="P-loop containing nucleoside triphosphate hydrolases"/>
    <property type="match status" value="1"/>
</dbReference>
<dbReference type="PROSITE" id="PS50936">
    <property type="entry name" value="ENGC_GTPASE"/>
    <property type="match status" value="1"/>
</dbReference>
<dbReference type="PROSITE" id="PS51721">
    <property type="entry name" value="G_CP"/>
    <property type="match status" value="1"/>
</dbReference>
<comment type="function">
    <text evidence="1">One of several proteins that assist in the late maturation steps of the functional core of the 30S ribosomal subunit. Helps release RbfA from mature subunits. May play a role in the assembly of ribosomal proteins into the subunit. Circularly permuted GTPase that catalyzes slow GTP hydrolysis, GTPase activity is stimulated by the 30S ribosomal subunit.</text>
</comment>
<comment type="cofactor">
    <cofactor evidence="1">
        <name>Zn(2+)</name>
        <dbReference type="ChEBI" id="CHEBI:29105"/>
    </cofactor>
    <text evidence="1">Binds 1 zinc ion per subunit.</text>
</comment>
<comment type="subunit">
    <text evidence="1">Monomer. Associates with 30S ribosomal subunit, binds 16S rRNA.</text>
</comment>
<comment type="subcellular location">
    <subcellularLocation>
        <location evidence="1">Cytoplasm</location>
    </subcellularLocation>
</comment>
<comment type="similarity">
    <text evidence="1">Belongs to the TRAFAC class YlqF/YawG GTPase family. RsgA subfamily.</text>
</comment>
<proteinExistence type="inferred from homology"/>
<evidence type="ECO:0000255" key="1">
    <source>
        <dbReference type="HAMAP-Rule" id="MF_01820"/>
    </source>
</evidence>
<evidence type="ECO:0000255" key="2">
    <source>
        <dbReference type="PROSITE-ProRule" id="PRU01058"/>
    </source>
</evidence>
<evidence type="ECO:0000256" key="3">
    <source>
        <dbReference type="SAM" id="MobiDB-lite"/>
    </source>
</evidence>
<sequence>MSKNKLSKGQQRRVNANHQRRLKTSKEKPDYDDNLFGEPDEGIVISRFGMHADVESADGDVHRCNIRRTIRSLVTGDRVVWRPGKPAAEGVNVKGIVEAVHERTSVLTRPDFYDGVKPIAANIDQIVIVSAILPELSLNIIDRYLVACETLQIEPIIVLNKIDLLDDEGMAFVNEQMDIYRNIGYRVLMVSSHTQDGLKPLEEALTGRISIFAGQSGVGKSSLLNALLGLQKEILTNDVSDNSGLGQHTTTAARLYHFPHGGDVIDSPGVREFGLWHLEPEQITQGFVEFHDYLGLCKYRDCKHDTDPGCAIREAVEEGKIAETRFENYHRILESMAQVKTRKNFSDTDD</sequence>
<gene>
    <name evidence="1" type="primary">rsgA</name>
    <name type="ordered locus">EC55989_4718</name>
</gene>
<name>RSGA_ECO55</name>